<feature type="chain" id="PRO_1000198676" description="Pyrimidine/purine nucleoside phosphorylase">
    <location>
        <begin position="1"/>
        <end position="94"/>
    </location>
</feature>
<sequence length="94" mass="10189">MLQSNEYFSGKVKSIGFTSSSTGRASVGVMAEGEYTFGTAEPEEMTVVSGALKVLLPGTVEWKVYTAGEVFNVPGHSEFHLQVAEPTSYLCRYL</sequence>
<protein>
    <recommendedName>
        <fullName evidence="1">Pyrimidine/purine nucleoside phosphorylase</fullName>
        <ecNumber evidence="1">2.4.2.1</ecNumber>
        <ecNumber evidence="1">2.4.2.2</ecNumber>
    </recommendedName>
    <alternativeName>
        <fullName evidence="1">Adenosine phosphorylase</fullName>
    </alternativeName>
    <alternativeName>
        <fullName evidence="1">Cytidine phosphorylase</fullName>
    </alternativeName>
    <alternativeName>
        <fullName evidence="1">Guanosine phosphorylase</fullName>
    </alternativeName>
    <alternativeName>
        <fullName evidence="1">Inosine phosphorylase</fullName>
    </alternativeName>
    <alternativeName>
        <fullName evidence="1">Thymidine phosphorylase</fullName>
    </alternativeName>
    <alternativeName>
        <fullName evidence="1">Uridine phosphorylase</fullName>
    </alternativeName>
    <alternativeName>
        <fullName evidence="1">Xanthosine phosphorylase</fullName>
    </alternativeName>
</protein>
<dbReference type="EC" id="2.4.2.1" evidence="1"/>
<dbReference type="EC" id="2.4.2.2" evidence="1"/>
<dbReference type="EMBL" id="AM933173">
    <property type="protein sequence ID" value="CAR36302.1"/>
    <property type="molecule type" value="Genomic_DNA"/>
</dbReference>
<dbReference type="RefSeq" id="WP_000941953.1">
    <property type="nucleotide sequence ID" value="NC_011274.1"/>
</dbReference>
<dbReference type="SMR" id="B5R5Y2"/>
<dbReference type="KEGG" id="seg:SG0403"/>
<dbReference type="HOGENOM" id="CLU_157874_0_0_6"/>
<dbReference type="Proteomes" id="UP000008321">
    <property type="component" value="Chromosome"/>
</dbReference>
<dbReference type="GO" id="GO:0005829">
    <property type="term" value="C:cytosol"/>
    <property type="evidence" value="ECO:0007669"/>
    <property type="project" value="TreeGrafter"/>
</dbReference>
<dbReference type="GO" id="GO:0047975">
    <property type="term" value="F:guanosine phosphorylase activity"/>
    <property type="evidence" value="ECO:0007669"/>
    <property type="project" value="UniProtKB-EC"/>
</dbReference>
<dbReference type="GO" id="GO:0004731">
    <property type="term" value="F:purine-nucleoside phosphorylase activity"/>
    <property type="evidence" value="ECO:0007669"/>
    <property type="project" value="UniProtKB-UniRule"/>
</dbReference>
<dbReference type="GO" id="GO:0009032">
    <property type="term" value="F:thymidine phosphorylase activity"/>
    <property type="evidence" value="ECO:0007669"/>
    <property type="project" value="UniProtKB-EC"/>
</dbReference>
<dbReference type="GO" id="GO:0004850">
    <property type="term" value="F:uridine phosphorylase activity"/>
    <property type="evidence" value="ECO:0007669"/>
    <property type="project" value="UniProtKB-EC"/>
</dbReference>
<dbReference type="CDD" id="cd20296">
    <property type="entry name" value="cupin_PpnP-like"/>
    <property type="match status" value="1"/>
</dbReference>
<dbReference type="FunFam" id="2.60.120.10:FF:000016">
    <property type="entry name" value="Pyrimidine/purine nucleoside phosphorylase"/>
    <property type="match status" value="1"/>
</dbReference>
<dbReference type="Gene3D" id="2.60.120.10">
    <property type="entry name" value="Jelly Rolls"/>
    <property type="match status" value="1"/>
</dbReference>
<dbReference type="HAMAP" id="MF_01537">
    <property type="entry name" value="Nucleos_phosphorylase_PpnP"/>
    <property type="match status" value="1"/>
</dbReference>
<dbReference type="InterPro" id="IPR009664">
    <property type="entry name" value="Ppnp"/>
</dbReference>
<dbReference type="InterPro" id="IPR014710">
    <property type="entry name" value="RmlC-like_jellyroll"/>
</dbReference>
<dbReference type="InterPro" id="IPR011051">
    <property type="entry name" value="RmlC_Cupin_sf"/>
</dbReference>
<dbReference type="NCBIfam" id="NF007875">
    <property type="entry name" value="PRK10579.1"/>
    <property type="match status" value="1"/>
</dbReference>
<dbReference type="PANTHER" id="PTHR36540">
    <property type="entry name" value="PYRIMIDINE/PURINE NUCLEOSIDE PHOSPHORYLASE"/>
    <property type="match status" value="1"/>
</dbReference>
<dbReference type="PANTHER" id="PTHR36540:SF1">
    <property type="entry name" value="PYRIMIDINE_PURINE NUCLEOSIDE PHOSPHORYLASE"/>
    <property type="match status" value="1"/>
</dbReference>
<dbReference type="Pfam" id="PF06865">
    <property type="entry name" value="Ppnp"/>
    <property type="match status" value="1"/>
</dbReference>
<dbReference type="SUPFAM" id="SSF51182">
    <property type="entry name" value="RmlC-like cupins"/>
    <property type="match status" value="1"/>
</dbReference>
<comment type="function">
    <text evidence="1">Catalyzes the phosphorolysis of diverse nucleosides, yielding D-ribose 1-phosphate and the respective free bases. Can use uridine, adenosine, guanosine, cytidine, thymidine, inosine and xanthosine as substrates. Also catalyzes the reverse reactions.</text>
</comment>
<comment type="catalytic activity">
    <reaction evidence="1">
        <text>a purine D-ribonucleoside + phosphate = a purine nucleobase + alpha-D-ribose 1-phosphate</text>
        <dbReference type="Rhea" id="RHEA:19805"/>
        <dbReference type="ChEBI" id="CHEBI:26386"/>
        <dbReference type="ChEBI" id="CHEBI:43474"/>
        <dbReference type="ChEBI" id="CHEBI:57720"/>
        <dbReference type="ChEBI" id="CHEBI:142355"/>
        <dbReference type="EC" id="2.4.2.1"/>
    </reaction>
</comment>
<comment type="catalytic activity">
    <reaction evidence="1">
        <text>adenosine + phosphate = alpha-D-ribose 1-phosphate + adenine</text>
        <dbReference type="Rhea" id="RHEA:27642"/>
        <dbReference type="ChEBI" id="CHEBI:16335"/>
        <dbReference type="ChEBI" id="CHEBI:16708"/>
        <dbReference type="ChEBI" id="CHEBI:43474"/>
        <dbReference type="ChEBI" id="CHEBI:57720"/>
        <dbReference type="EC" id="2.4.2.1"/>
    </reaction>
</comment>
<comment type="catalytic activity">
    <reaction evidence="1">
        <text>cytidine + phosphate = cytosine + alpha-D-ribose 1-phosphate</text>
        <dbReference type="Rhea" id="RHEA:52540"/>
        <dbReference type="ChEBI" id="CHEBI:16040"/>
        <dbReference type="ChEBI" id="CHEBI:17562"/>
        <dbReference type="ChEBI" id="CHEBI:43474"/>
        <dbReference type="ChEBI" id="CHEBI:57720"/>
        <dbReference type="EC" id="2.4.2.2"/>
    </reaction>
</comment>
<comment type="catalytic activity">
    <reaction evidence="1">
        <text>guanosine + phosphate = alpha-D-ribose 1-phosphate + guanine</text>
        <dbReference type="Rhea" id="RHEA:13233"/>
        <dbReference type="ChEBI" id="CHEBI:16235"/>
        <dbReference type="ChEBI" id="CHEBI:16750"/>
        <dbReference type="ChEBI" id="CHEBI:43474"/>
        <dbReference type="ChEBI" id="CHEBI:57720"/>
        <dbReference type="EC" id="2.4.2.1"/>
    </reaction>
</comment>
<comment type="catalytic activity">
    <reaction evidence="1">
        <text>inosine + phosphate = alpha-D-ribose 1-phosphate + hypoxanthine</text>
        <dbReference type="Rhea" id="RHEA:27646"/>
        <dbReference type="ChEBI" id="CHEBI:17368"/>
        <dbReference type="ChEBI" id="CHEBI:17596"/>
        <dbReference type="ChEBI" id="CHEBI:43474"/>
        <dbReference type="ChEBI" id="CHEBI:57720"/>
        <dbReference type="EC" id="2.4.2.1"/>
    </reaction>
</comment>
<comment type="catalytic activity">
    <reaction evidence="1">
        <text>thymidine + phosphate = 2-deoxy-alpha-D-ribose 1-phosphate + thymine</text>
        <dbReference type="Rhea" id="RHEA:16037"/>
        <dbReference type="ChEBI" id="CHEBI:17748"/>
        <dbReference type="ChEBI" id="CHEBI:17821"/>
        <dbReference type="ChEBI" id="CHEBI:43474"/>
        <dbReference type="ChEBI" id="CHEBI:57259"/>
        <dbReference type="EC" id="2.4.2.2"/>
    </reaction>
</comment>
<comment type="catalytic activity">
    <reaction evidence="1">
        <text>uridine + phosphate = alpha-D-ribose 1-phosphate + uracil</text>
        <dbReference type="Rhea" id="RHEA:24388"/>
        <dbReference type="ChEBI" id="CHEBI:16704"/>
        <dbReference type="ChEBI" id="CHEBI:17568"/>
        <dbReference type="ChEBI" id="CHEBI:43474"/>
        <dbReference type="ChEBI" id="CHEBI:57720"/>
        <dbReference type="EC" id="2.4.2.2"/>
    </reaction>
</comment>
<comment type="catalytic activity">
    <reaction evidence="1">
        <text>xanthosine + phosphate = alpha-D-ribose 1-phosphate + xanthine</text>
        <dbReference type="Rhea" id="RHEA:27638"/>
        <dbReference type="ChEBI" id="CHEBI:17712"/>
        <dbReference type="ChEBI" id="CHEBI:18107"/>
        <dbReference type="ChEBI" id="CHEBI:43474"/>
        <dbReference type="ChEBI" id="CHEBI:57720"/>
        <dbReference type="EC" id="2.4.2.1"/>
    </reaction>
</comment>
<comment type="similarity">
    <text evidence="1">Belongs to the nucleoside phosphorylase PpnP family.</text>
</comment>
<gene>
    <name evidence="1" type="primary">ppnP</name>
    <name type="ordered locus">SG0403</name>
</gene>
<proteinExistence type="inferred from homology"/>
<name>PPNP_SALG2</name>
<organism>
    <name type="scientific">Salmonella gallinarum (strain 287/91 / NCTC 13346)</name>
    <dbReference type="NCBI Taxonomy" id="550538"/>
    <lineage>
        <taxon>Bacteria</taxon>
        <taxon>Pseudomonadati</taxon>
        <taxon>Pseudomonadota</taxon>
        <taxon>Gammaproteobacteria</taxon>
        <taxon>Enterobacterales</taxon>
        <taxon>Enterobacteriaceae</taxon>
        <taxon>Salmonella</taxon>
    </lineage>
</organism>
<accession>B5R5Y2</accession>
<evidence type="ECO:0000255" key="1">
    <source>
        <dbReference type="HAMAP-Rule" id="MF_01537"/>
    </source>
</evidence>
<reference key="1">
    <citation type="journal article" date="2008" name="Genome Res.">
        <title>Comparative genome analysis of Salmonella enteritidis PT4 and Salmonella gallinarum 287/91 provides insights into evolutionary and host adaptation pathways.</title>
        <authorList>
            <person name="Thomson N.R."/>
            <person name="Clayton D.J."/>
            <person name="Windhorst D."/>
            <person name="Vernikos G."/>
            <person name="Davidson S."/>
            <person name="Churcher C."/>
            <person name="Quail M.A."/>
            <person name="Stevens M."/>
            <person name="Jones M.A."/>
            <person name="Watson M."/>
            <person name="Barron A."/>
            <person name="Layton A."/>
            <person name="Pickard D."/>
            <person name="Kingsley R.A."/>
            <person name="Bignell A."/>
            <person name="Clark L."/>
            <person name="Harris B."/>
            <person name="Ormond D."/>
            <person name="Abdellah Z."/>
            <person name="Brooks K."/>
            <person name="Cherevach I."/>
            <person name="Chillingworth T."/>
            <person name="Woodward J."/>
            <person name="Norberczak H."/>
            <person name="Lord A."/>
            <person name="Arrowsmith C."/>
            <person name="Jagels K."/>
            <person name="Moule S."/>
            <person name="Mungall K."/>
            <person name="Saunders M."/>
            <person name="Whitehead S."/>
            <person name="Chabalgoity J.A."/>
            <person name="Maskell D."/>
            <person name="Humphreys T."/>
            <person name="Roberts M."/>
            <person name="Barrow P.A."/>
            <person name="Dougan G."/>
            <person name="Parkhill J."/>
        </authorList>
    </citation>
    <scope>NUCLEOTIDE SEQUENCE [LARGE SCALE GENOMIC DNA]</scope>
    <source>
        <strain>287/91 / NCTC 13346</strain>
    </source>
</reference>
<keyword id="KW-0328">Glycosyltransferase</keyword>
<keyword id="KW-0808">Transferase</keyword>